<reference key="1">
    <citation type="submission" date="1995-05" db="EMBL/GenBank/DDBJ databases">
        <title>Wheat FKBP70 - a novel heat shock and calmodulin binding PPIase.</title>
        <authorList>
            <person name="Oshra B."/>
            <person name="Breiman A."/>
        </authorList>
    </citation>
    <scope>NUCLEOTIDE SEQUENCE [MRNA]</scope>
    <source>
        <strain>cv. Atir</strain>
        <tissue>Root tip</tissue>
    </source>
</reference>
<evidence type="ECO:0000255" key="1">
    <source>
        <dbReference type="PROSITE-ProRule" id="PRU00277"/>
    </source>
</evidence>
<evidence type="ECO:0000256" key="2">
    <source>
        <dbReference type="SAM" id="MobiDB-lite"/>
    </source>
</evidence>
<evidence type="ECO:0007829" key="3">
    <source>
        <dbReference type="PDB" id="3JXV"/>
    </source>
</evidence>
<evidence type="ECO:0007829" key="4">
    <source>
        <dbReference type="PDB" id="3JYM"/>
    </source>
</evidence>
<keyword id="KW-0002">3D-structure</keyword>
<keyword id="KW-0112">Calmodulin-binding</keyword>
<keyword id="KW-0413">Isomerase</keyword>
<keyword id="KW-1185">Reference proteome</keyword>
<keyword id="KW-0677">Repeat</keyword>
<keyword id="KW-0697">Rotamase</keyword>
<keyword id="KW-0346">Stress response</keyword>
<keyword id="KW-0802">TPR repeat</keyword>
<gene>
    <name type="primary">FKBP70</name>
</gene>
<proteinExistence type="evidence at protein level"/>
<dbReference type="EC" id="5.2.1.8"/>
<dbReference type="EMBL" id="X86903">
    <property type="protein sequence ID" value="CAA60505.1"/>
    <property type="molecule type" value="mRNA"/>
</dbReference>
<dbReference type="PIR" id="S55383">
    <property type="entry name" value="S55383"/>
</dbReference>
<dbReference type="PDB" id="3JXV">
    <property type="method" value="X-ray"/>
    <property type="resolution" value="2.08 A"/>
    <property type="chains" value="A=31-386"/>
</dbReference>
<dbReference type="PDB" id="3JYM">
    <property type="method" value="X-ray"/>
    <property type="resolution" value="2.28 A"/>
    <property type="chains" value="A/B=15-391"/>
</dbReference>
<dbReference type="PDBsum" id="3JXV"/>
<dbReference type="PDBsum" id="3JYM"/>
<dbReference type="SMR" id="Q43207"/>
<dbReference type="STRING" id="4565.Q43207"/>
<dbReference type="PaxDb" id="4565-Traes_7BS_0B7C600F6.1"/>
<dbReference type="eggNOG" id="KOG0543">
    <property type="taxonomic scope" value="Eukaryota"/>
</dbReference>
<dbReference type="EvolutionaryTrace" id="Q43207"/>
<dbReference type="Proteomes" id="UP000019116">
    <property type="component" value="Unplaced"/>
</dbReference>
<dbReference type="ExpressionAtlas" id="Q43207">
    <property type="expression patterns" value="baseline and differential"/>
</dbReference>
<dbReference type="GO" id="GO:0005737">
    <property type="term" value="C:cytoplasm"/>
    <property type="evidence" value="ECO:0000318"/>
    <property type="project" value="GO_Central"/>
</dbReference>
<dbReference type="GO" id="GO:0005516">
    <property type="term" value="F:calmodulin binding"/>
    <property type="evidence" value="ECO:0007669"/>
    <property type="project" value="UniProtKB-KW"/>
</dbReference>
<dbReference type="GO" id="GO:0003755">
    <property type="term" value="F:peptidyl-prolyl cis-trans isomerase activity"/>
    <property type="evidence" value="ECO:0000318"/>
    <property type="project" value="GO_Central"/>
</dbReference>
<dbReference type="GO" id="GO:0061077">
    <property type="term" value="P:chaperone-mediated protein folding"/>
    <property type="evidence" value="ECO:0000318"/>
    <property type="project" value="GO_Central"/>
</dbReference>
<dbReference type="FunFam" id="1.25.40.10:FF:000008">
    <property type="entry name" value="Peptidylprolyl isomerase"/>
    <property type="match status" value="1"/>
</dbReference>
<dbReference type="FunFam" id="3.10.50.40:FF:000012">
    <property type="entry name" value="Peptidylprolyl isomerase"/>
    <property type="match status" value="1"/>
</dbReference>
<dbReference type="FunFam" id="3.10.50.40:FF:000017">
    <property type="entry name" value="Peptidylprolyl isomerase"/>
    <property type="match status" value="1"/>
</dbReference>
<dbReference type="FunFam" id="3.10.50.40:FF:000022">
    <property type="entry name" value="Peptidylprolyl isomerase"/>
    <property type="match status" value="1"/>
</dbReference>
<dbReference type="Gene3D" id="3.10.50.40">
    <property type="match status" value="3"/>
</dbReference>
<dbReference type="Gene3D" id="1.25.40.10">
    <property type="entry name" value="Tetratricopeptide repeat domain"/>
    <property type="match status" value="1"/>
</dbReference>
<dbReference type="InterPro" id="IPR050754">
    <property type="entry name" value="FKBP4/5/8-like"/>
</dbReference>
<dbReference type="InterPro" id="IPR046357">
    <property type="entry name" value="PPIase_dom_sf"/>
</dbReference>
<dbReference type="InterPro" id="IPR001179">
    <property type="entry name" value="PPIase_FKBP_dom"/>
</dbReference>
<dbReference type="InterPro" id="IPR011990">
    <property type="entry name" value="TPR-like_helical_dom_sf"/>
</dbReference>
<dbReference type="InterPro" id="IPR019734">
    <property type="entry name" value="TPR_rpt"/>
</dbReference>
<dbReference type="PANTHER" id="PTHR46512">
    <property type="entry name" value="PEPTIDYLPROLYL ISOMERASE"/>
    <property type="match status" value="1"/>
</dbReference>
<dbReference type="PANTHER" id="PTHR46512:SF9">
    <property type="entry name" value="PEPTIDYLPROLYL ISOMERASE"/>
    <property type="match status" value="1"/>
</dbReference>
<dbReference type="Pfam" id="PF00254">
    <property type="entry name" value="FKBP_C"/>
    <property type="match status" value="3"/>
</dbReference>
<dbReference type="Pfam" id="PF00515">
    <property type="entry name" value="TPR_1"/>
    <property type="match status" value="1"/>
</dbReference>
<dbReference type="SMART" id="SM00028">
    <property type="entry name" value="TPR"/>
    <property type="match status" value="3"/>
</dbReference>
<dbReference type="SUPFAM" id="SSF54534">
    <property type="entry name" value="FKBP-like"/>
    <property type="match status" value="3"/>
</dbReference>
<dbReference type="SUPFAM" id="SSF48452">
    <property type="entry name" value="TPR-like"/>
    <property type="match status" value="1"/>
</dbReference>
<dbReference type="PROSITE" id="PS50059">
    <property type="entry name" value="FKBP_PPIASE"/>
    <property type="match status" value="3"/>
</dbReference>
<dbReference type="PROSITE" id="PS50005">
    <property type="entry name" value="TPR"/>
    <property type="match status" value="3"/>
</dbReference>
<dbReference type="PROSITE" id="PS50293">
    <property type="entry name" value="TPR_REGION"/>
    <property type="match status" value="2"/>
</dbReference>
<comment type="function">
    <text>PPIases accelerate the folding of proteins during protein synthesis.</text>
</comment>
<comment type="catalytic activity">
    <reaction>
        <text>[protein]-peptidylproline (omega=180) = [protein]-peptidylproline (omega=0)</text>
        <dbReference type="Rhea" id="RHEA:16237"/>
        <dbReference type="Rhea" id="RHEA-COMP:10747"/>
        <dbReference type="Rhea" id="RHEA-COMP:10748"/>
        <dbReference type="ChEBI" id="CHEBI:83833"/>
        <dbReference type="ChEBI" id="CHEBI:83834"/>
        <dbReference type="EC" id="5.2.1.8"/>
    </reaction>
</comment>
<comment type="subunit">
    <text>This PPIase probably binds calmodulin.</text>
</comment>
<comment type="induction">
    <text>By heat shock.</text>
</comment>
<feature type="chain" id="PRO_0000075335" description="70 kDa peptidyl-prolyl isomerase">
    <location>
        <begin position="1"/>
        <end position="559"/>
    </location>
</feature>
<feature type="domain" description="PPIase FKBP-type 1" evidence="1">
    <location>
        <begin position="60"/>
        <end position="148"/>
    </location>
</feature>
<feature type="domain" description="PPIase FKBP-type 2" evidence="1">
    <location>
        <begin position="176"/>
        <end position="265"/>
    </location>
</feature>
<feature type="domain" description="PPIase FKBP-type 3" evidence="1">
    <location>
        <begin position="293"/>
        <end position="384"/>
    </location>
</feature>
<feature type="repeat" description="TPR 1">
    <location>
        <begin position="401"/>
        <end position="434"/>
    </location>
</feature>
<feature type="repeat" description="TPR 2">
    <location>
        <begin position="450"/>
        <end position="483"/>
    </location>
</feature>
<feature type="repeat" description="TPR 3">
    <location>
        <begin position="484"/>
        <end position="517"/>
    </location>
</feature>
<feature type="region of interest" description="Disordered" evidence="2">
    <location>
        <begin position="1"/>
        <end position="34"/>
    </location>
</feature>
<feature type="compositionally biased region" description="Gly residues" evidence="2">
    <location>
        <begin position="17"/>
        <end position="27"/>
    </location>
</feature>
<feature type="strand" evidence="4">
    <location>
        <begin position="34"/>
        <end position="36"/>
    </location>
</feature>
<feature type="strand" evidence="4">
    <location>
        <begin position="62"/>
        <end position="66"/>
    </location>
</feature>
<feature type="turn" evidence="4">
    <location>
        <begin position="91"/>
        <end position="94"/>
    </location>
</feature>
<feature type="helix" evidence="4">
    <location>
        <begin position="100"/>
        <end position="106"/>
    </location>
</feature>
<feature type="strand" evidence="4">
    <location>
        <begin position="112"/>
        <end position="116"/>
    </location>
</feature>
<feature type="strand" evidence="4">
    <location>
        <begin position="139"/>
        <end position="148"/>
    </location>
</feature>
<feature type="strand" evidence="3">
    <location>
        <begin position="150"/>
        <end position="152"/>
    </location>
</feature>
<feature type="strand" evidence="3">
    <location>
        <begin position="155"/>
        <end position="165"/>
    </location>
</feature>
<feature type="strand" evidence="3">
    <location>
        <begin position="168"/>
        <end position="170"/>
    </location>
</feature>
<feature type="strand" evidence="3">
    <location>
        <begin position="178"/>
        <end position="187"/>
    </location>
</feature>
<feature type="strand" evidence="3">
    <location>
        <begin position="192"/>
        <end position="202"/>
    </location>
</feature>
<feature type="helix" evidence="3">
    <location>
        <begin position="203"/>
        <end position="205"/>
    </location>
</feature>
<feature type="strand" evidence="3">
    <location>
        <begin position="207"/>
        <end position="209"/>
    </location>
</feature>
<feature type="helix" evidence="3">
    <location>
        <begin position="210"/>
        <end position="216"/>
    </location>
</feature>
<feature type="strand" evidence="3">
    <location>
        <begin position="224"/>
        <end position="229"/>
    </location>
</feature>
<feature type="helix" evidence="3">
    <location>
        <begin position="231"/>
        <end position="233"/>
    </location>
</feature>
<feature type="turn" evidence="3">
    <location>
        <begin position="234"/>
        <end position="238"/>
    </location>
</feature>
<feature type="strand" evidence="3">
    <location>
        <begin position="255"/>
        <end position="265"/>
    </location>
</feature>
<feature type="strand" evidence="3">
    <location>
        <begin position="267"/>
        <end position="271"/>
    </location>
</feature>
<feature type="strand" evidence="3">
    <location>
        <begin position="276"/>
        <end position="282"/>
    </location>
</feature>
<feature type="strand" evidence="3">
    <location>
        <begin position="285"/>
        <end position="287"/>
    </location>
</feature>
<feature type="strand" evidence="3">
    <location>
        <begin position="295"/>
        <end position="307"/>
    </location>
</feature>
<feature type="strand" evidence="3">
    <location>
        <begin position="309"/>
        <end position="314"/>
    </location>
</feature>
<feature type="strand" evidence="3">
    <location>
        <begin position="322"/>
        <end position="324"/>
    </location>
</feature>
<feature type="turn" evidence="3">
    <location>
        <begin position="325"/>
        <end position="328"/>
    </location>
</feature>
<feature type="helix" evidence="3">
    <location>
        <begin position="332"/>
        <end position="338"/>
    </location>
</feature>
<feature type="strand" evidence="3">
    <location>
        <begin position="346"/>
        <end position="351"/>
    </location>
</feature>
<feature type="helix" evidence="3">
    <location>
        <begin position="353"/>
        <end position="355"/>
    </location>
</feature>
<feature type="turn" evidence="3">
    <location>
        <begin position="356"/>
        <end position="359"/>
    </location>
</feature>
<feature type="strand" evidence="3">
    <location>
        <begin position="362"/>
        <end position="368"/>
    </location>
</feature>
<feature type="strand" evidence="3">
    <location>
        <begin position="374"/>
        <end position="384"/>
    </location>
</feature>
<sequence>MDDDFDIPAGDDMMMGDGMGDFGGAEGPGMKVGEENEIGKQGLKKKLLKEGEGWDTPEVGDEVEVHYTGTLLDGKKFDSSRDRDDTFKFKLGQGQVIKGWDQGIKTMKKGENALFTIPPELAYGESGSPPTIPANATLQFDVELLSWTSVRDIAKDGGIFKKILKEGDKWENPKDPDEVFVKYEARLEDGTVVSKSEGVEFTVKDGHLCPALAKAVKTMKKGEKVLLAVKPQYGFGEMGRPAAGEGGAVPPNASLVIDLELVSWKTVTEIGDDKKILKKVLKEXEGYERPNEGAVVTVKITGKLQDGTVFLKKGHDEQEPFEFKTDEEAVIEGLDRAVLNMKKGEVALVTIPPEYAYGSTESKQDAIVPPNSTVIYEVELVSFVKDKESWDLNNSEKIEAAGTKKEEGNALFKSGKYARASKRYEKAAKFIEYDTSFSEDEKKQSKQLKITCNLNNAACKLKLKDYKQAEKLCTKVLELDSRNVKALYRRAQAYTQLADLELAEVDIKKALEIDPENRDVKLTYKTLKEKIKEINKKDAKFYSNMFSKMTKPSAEESKA</sequence>
<protein>
    <recommendedName>
        <fullName>70 kDa peptidyl-prolyl isomerase</fullName>
        <ecNumber>5.2.1.8</ecNumber>
    </recommendedName>
    <alternativeName>
        <fullName>Peptidyl-prolyl cis-trans isomerase</fullName>
        <shortName>PPIase</shortName>
    </alternativeName>
    <alternativeName>
        <fullName>Rotamase</fullName>
    </alternativeName>
</protein>
<name>FKB70_WHEAT</name>
<organism>
    <name type="scientific">Triticum aestivum</name>
    <name type="common">Wheat</name>
    <dbReference type="NCBI Taxonomy" id="4565"/>
    <lineage>
        <taxon>Eukaryota</taxon>
        <taxon>Viridiplantae</taxon>
        <taxon>Streptophyta</taxon>
        <taxon>Embryophyta</taxon>
        <taxon>Tracheophyta</taxon>
        <taxon>Spermatophyta</taxon>
        <taxon>Magnoliopsida</taxon>
        <taxon>Liliopsida</taxon>
        <taxon>Poales</taxon>
        <taxon>Poaceae</taxon>
        <taxon>BOP clade</taxon>
        <taxon>Pooideae</taxon>
        <taxon>Triticodae</taxon>
        <taxon>Triticeae</taxon>
        <taxon>Triticinae</taxon>
        <taxon>Triticum</taxon>
    </lineage>
</organism>
<accession>Q43207</accession>